<organism>
    <name type="scientific">Thermus thermophilus (strain ATCC 27634 / DSM 579 / HB8)</name>
    <dbReference type="NCBI Taxonomy" id="300852"/>
    <lineage>
        <taxon>Bacteria</taxon>
        <taxon>Thermotogati</taxon>
        <taxon>Deinococcota</taxon>
        <taxon>Deinococci</taxon>
        <taxon>Thermales</taxon>
        <taxon>Thermaceae</taxon>
        <taxon>Thermus</taxon>
    </lineage>
</organism>
<reference key="1">
    <citation type="journal article" date="1992" name="Eur. J. Biochem.">
        <title>Molecular cloning and nucleotide sequence of the gene encoding a H2O2-forming NADH oxidase from the extreme thermophilic Thermus thermophilus HB8 and its expression in Escherichia coli.</title>
        <authorList>
            <person name="Park H.-J."/>
            <person name="Kreutzer R."/>
            <person name="Reiser C.O.A."/>
            <person name="Sprinzl M."/>
        </authorList>
    </citation>
    <scope>NUCLEOTIDE SEQUENCE [GENOMIC DNA]</scope>
</reference>
<reference key="2">
    <citation type="journal article" date="1993" name="Eur. J. Biochem.">
        <authorList>
            <person name="Park H.-J."/>
            <person name="Kreutzer R."/>
            <person name="Reiser C.O.A."/>
            <person name="Sprinzl M."/>
        </authorList>
    </citation>
    <scope>ERRATUM OF PUBMED:1577004</scope>
</reference>
<reference key="3">
    <citation type="submission" date="2004-11" db="EMBL/GenBank/DDBJ databases">
        <title>Complete genome sequence of Thermus thermophilus HB8.</title>
        <authorList>
            <person name="Masui R."/>
            <person name="Kurokawa K."/>
            <person name="Nakagawa N."/>
            <person name="Tokunaga F."/>
            <person name="Koyama Y."/>
            <person name="Shibata T."/>
            <person name="Oshima T."/>
            <person name="Yokoyama S."/>
            <person name="Yasunaga T."/>
            <person name="Kuramitsu S."/>
        </authorList>
    </citation>
    <scope>NUCLEOTIDE SEQUENCE [LARGE SCALE GENOMIC DNA]</scope>
    <source>
        <strain>ATCC 27634 / DSM 579 / HB8</strain>
    </source>
</reference>
<reference key="4">
    <citation type="journal article" date="1992" name="Eur. J. Biochem.">
        <title>Purification and characterization of a NADH oxidase from the thermophile Thermus thermophilus HB8.</title>
        <authorList>
            <person name="Park H.-J."/>
            <person name="Reiser C.O.A."/>
            <person name="Kondruweit S."/>
            <person name="Erdmann H."/>
            <person name="Schmid R.D."/>
            <person name="Sprinzl M."/>
        </authorList>
    </citation>
    <scope>PROTEIN SEQUENCE OF 1-32</scope>
    <scope>CHARACTERIZATION</scope>
</reference>
<reference key="5">
    <citation type="journal article" date="1995" name="Nat. Struct. Biol.">
        <title>Crystal structure of NADH oxidase from Thermus thermophilus.</title>
        <authorList>
            <person name="Hecht H.J."/>
            <person name="Erdmann H."/>
            <person name="Park H.J."/>
            <person name="Sprinzl M."/>
            <person name="Schmid R.D."/>
        </authorList>
    </citation>
    <scope>X-RAY CRYSTALLOGRAPHY (1.59 ANGSTROMS) IN COMPLEX WITH FMN</scope>
    <scope>SUBUNIT</scope>
</reference>
<feature type="chain" id="PRO_0000072721" description="NADH dehydrogenase">
    <location>
        <begin position="1"/>
        <end position="205"/>
    </location>
</feature>
<feature type="binding site" evidence="1">
    <location>
        <begin position="17"/>
        <end position="21"/>
    </location>
    <ligand>
        <name>FMN</name>
        <dbReference type="ChEBI" id="CHEBI:58210"/>
    </ligand>
</feature>
<feature type="binding site" evidence="1">
    <location>
        <position position="73"/>
    </location>
    <ligand>
        <name>FMN</name>
        <dbReference type="ChEBI" id="CHEBI:58210"/>
    </ligand>
</feature>
<feature type="binding site" evidence="1">
    <location>
        <begin position="158"/>
        <end position="159"/>
    </location>
    <ligand>
        <name>FMN</name>
        <dbReference type="ChEBI" id="CHEBI:58210"/>
    </ligand>
</feature>
<feature type="binding site" evidence="1">
    <location>
        <position position="195"/>
    </location>
    <ligand>
        <name>FMN</name>
        <dbReference type="ChEBI" id="CHEBI:58210"/>
    </ligand>
</feature>
<feature type="sequence conflict" description="In Ref. 1; CAA42707/AAB25458." evidence="2" ref="1">
    <original>H</original>
    <variation>R</variation>
    <location>
        <position position="174"/>
    </location>
</feature>
<feature type="helix" evidence="3">
    <location>
        <begin position="10"/>
        <end position="16"/>
    </location>
</feature>
<feature type="helix" evidence="3">
    <location>
        <begin position="30"/>
        <end position="40"/>
    </location>
</feature>
<feature type="helix" evidence="3">
    <location>
        <begin position="46"/>
        <end position="48"/>
    </location>
</feature>
<feature type="strand" evidence="3">
    <location>
        <begin position="52"/>
        <end position="57"/>
    </location>
</feature>
<feature type="helix" evidence="3">
    <location>
        <begin position="60"/>
        <end position="69"/>
    </location>
</feature>
<feature type="turn" evidence="3">
    <location>
        <begin position="70"/>
        <end position="72"/>
    </location>
</feature>
<feature type="helix" evidence="3">
    <location>
        <begin position="75"/>
        <end position="78"/>
    </location>
</feature>
<feature type="strand" evidence="3">
    <location>
        <begin position="79"/>
        <end position="87"/>
    </location>
</feature>
<feature type="helix" evidence="3">
    <location>
        <begin position="89"/>
        <end position="94"/>
    </location>
</feature>
<feature type="helix" evidence="3">
    <location>
        <begin position="95"/>
        <end position="98"/>
    </location>
</feature>
<feature type="helix" evidence="3">
    <location>
        <begin position="107"/>
        <end position="121"/>
    </location>
</feature>
<feature type="helix" evidence="3">
    <location>
        <begin position="125"/>
        <end position="149"/>
    </location>
</feature>
<feature type="strand" evidence="3">
    <location>
        <begin position="153"/>
        <end position="157"/>
    </location>
</feature>
<feature type="helix" evidence="3">
    <location>
        <begin position="162"/>
        <end position="169"/>
    </location>
</feature>
<feature type="strand" evidence="3">
    <location>
        <begin position="176"/>
        <end position="188"/>
    </location>
</feature>
<feature type="helix" evidence="3">
    <location>
        <begin position="198"/>
        <end position="201"/>
    </location>
</feature>
<sequence length="205" mass="22730">MEATLPVLDAKTAALKRRSIRRYRKDPVPEGLLREILEAALRAPSAWNLQPWRIVVVRDPATKRALREAAFGQAHVEEAPVVLVLYADLEDALAHLDEVIHPGVQGERREAQKQAIQRAFAAMGQEARKAWASGQSYILLGYLLLLLEAYGLGSVPMLGFDPERVRAILGLPSHAAIPALVALGYPAEEGYPSHRLPLERVVLWR</sequence>
<keyword id="KW-0002">3D-structure</keyword>
<keyword id="KW-0903">Direct protein sequencing</keyword>
<keyword id="KW-0285">Flavoprotein</keyword>
<keyword id="KW-0288">FMN</keyword>
<keyword id="KW-0520">NAD</keyword>
<keyword id="KW-0560">Oxidoreductase</keyword>
<keyword id="KW-1185">Reference proteome</keyword>
<keyword id="KW-1278">Translocase</keyword>
<comment type="function">
    <text>Can oxidize either NADH or NADPH with a preference for NADH. Can catalyze electron transfer from NADH to various electron acceptors which include, in addition to molecular oxygen, cytochrome c, 2,6 dichlorphenolindophenol, methylene blue, ferricyanide or P-nitroblue tetrazolium.</text>
</comment>
<comment type="catalytic activity">
    <reaction>
        <text>a ubiquinone + NADH + 5 H(+)(in) = a ubiquinol + NAD(+) + 4 H(+)(out)</text>
        <dbReference type="Rhea" id="RHEA:29091"/>
        <dbReference type="Rhea" id="RHEA-COMP:9565"/>
        <dbReference type="Rhea" id="RHEA-COMP:9566"/>
        <dbReference type="ChEBI" id="CHEBI:15378"/>
        <dbReference type="ChEBI" id="CHEBI:16389"/>
        <dbReference type="ChEBI" id="CHEBI:17976"/>
        <dbReference type="ChEBI" id="CHEBI:57540"/>
        <dbReference type="ChEBI" id="CHEBI:57945"/>
        <dbReference type="EC" id="7.1.1.2"/>
    </reaction>
</comment>
<comment type="cofactor">
    <cofactor>
        <name>FMN</name>
        <dbReference type="ChEBI" id="CHEBI:58210"/>
    </cofactor>
    <text>Binds 1 FMN per subunit.</text>
</comment>
<comment type="biophysicochemical properties">
    <phDependence>
        <text>Optimum pH is 5.0.</text>
    </phDependence>
    <temperatureDependence>
        <text>Thermostable.</text>
    </temperatureDependence>
</comment>
<comment type="subunit">
    <text evidence="1">Homodimer.</text>
</comment>
<comment type="similarity">
    <text evidence="2">Belongs to the nitroreductase family.</text>
</comment>
<dbReference type="EC" id="7.1.1.2"/>
<dbReference type="EMBL" id="X60110">
    <property type="protein sequence ID" value="CAA42707.1"/>
    <property type="molecule type" value="Genomic_DNA"/>
</dbReference>
<dbReference type="EMBL" id="S55441">
    <property type="protein sequence ID" value="AAB25458.1"/>
    <property type="molecule type" value="Genomic_DNA"/>
</dbReference>
<dbReference type="EMBL" id="AP008226">
    <property type="protein sequence ID" value="BAD70248.1"/>
    <property type="molecule type" value="Genomic_DNA"/>
</dbReference>
<dbReference type="RefSeq" id="WP_011227925.1">
    <property type="nucleotide sequence ID" value="NC_006461.1"/>
</dbReference>
<dbReference type="RefSeq" id="YP_143691.1">
    <property type="nucleotide sequence ID" value="NC_006461.1"/>
</dbReference>
<dbReference type="PDB" id="1NOX">
    <property type="method" value="X-ray"/>
    <property type="resolution" value="1.59 A"/>
    <property type="chains" value="A=1-205"/>
</dbReference>
<dbReference type="PDBsum" id="1NOX"/>
<dbReference type="SMR" id="Q60049"/>
<dbReference type="DrugBank" id="DB03247">
    <property type="generic name" value="Flavin mononucleotide"/>
</dbReference>
<dbReference type="EnsemblBacteria" id="BAD70248">
    <property type="protein sequence ID" value="BAD70248"/>
    <property type="gene ID" value="BAD70248"/>
</dbReference>
<dbReference type="GeneID" id="3168975"/>
<dbReference type="KEGG" id="ttj:TTHA0425"/>
<dbReference type="PATRIC" id="fig|300852.9.peg.425"/>
<dbReference type="eggNOG" id="COG0778">
    <property type="taxonomic scope" value="Bacteria"/>
</dbReference>
<dbReference type="HOGENOM" id="CLU_070764_4_2_0"/>
<dbReference type="PhylomeDB" id="Q60049"/>
<dbReference type="EvolutionaryTrace" id="Q60049"/>
<dbReference type="PRO" id="PR:Q60049"/>
<dbReference type="Proteomes" id="UP000000532">
    <property type="component" value="Chromosome"/>
</dbReference>
<dbReference type="GO" id="GO:0008137">
    <property type="term" value="F:NADH dehydrogenase (ubiquinone) activity"/>
    <property type="evidence" value="ECO:0007669"/>
    <property type="project" value="UniProtKB-EC"/>
</dbReference>
<dbReference type="CDD" id="cd03370">
    <property type="entry name" value="nitroreductase"/>
    <property type="match status" value="1"/>
</dbReference>
<dbReference type="Gene3D" id="3.40.109.10">
    <property type="entry name" value="NADH Oxidase"/>
    <property type="match status" value="1"/>
</dbReference>
<dbReference type="InterPro" id="IPR029479">
    <property type="entry name" value="Nitroreductase"/>
</dbReference>
<dbReference type="InterPro" id="IPR000415">
    <property type="entry name" value="Nitroreductase-like"/>
</dbReference>
<dbReference type="PANTHER" id="PTHR43673">
    <property type="entry name" value="NAD(P)H NITROREDUCTASE YDGI-RELATED"/>
    <property type="match status" value="1"/>
</dbReference>
<dbReference type="PANTHER" id="PTHR43673:SF10">
    <property type="entry name" value="NADH DEHYDROGENASE_NAD(P)H NITROREDUCTASE XCC3605-RELATED"/>
    <property type="match status" value="1"/>
</dbReference>
<dbReference type="Pfam" id="PF00881">
    <property type="entry name" value="Nitroreductase"/>
    <property type="match status" value="1"/>
</dbReference>
<dbReference type="SUPFAM" id="SSF55469">
    <property type="entry name" value="FMN-dependent nitroreductase-like"/>
    <property type="match status" value="1"/>
</dbReference>
<proteinExistence type="evidence at protein level"/>
<evidence type="ECO:0000269" key="1">
    <source>
    </source>
</evidence>
<evidence type="ECO:0000305" key="2"/>
<evidence type="ECO:0007829" key="3">
    <source>
        <dbReference type="PDB" id="1NOX"/>
    </source>
</evidence>
<name>NOX_THET8</name>
<gene>
    <name type="primary">nox</name>
    <name type="ordered locus">TTHA0425</name>
</gene>
<protein>
    <recommendedName>
        <fullName>NADH dehydrogenase</fullName>
        <ecNumber>7.1.1.2</ecNumber>
    </recommendedName>
    <alternativeName>
        <fullName>H(2)O(2)-forming NADH oxidase</fullName>
    </alternativeName>
    <alternativeName>
        <fullName>NADH:oxygen oxidoreductase</fullName>
    </alternativeName>
</protein>
<accession>Q60049</accession>
<accession>Q53306</accession>
<accession>Q5SL68</accession>